<feature type="chain" id="PRO_1000194655" description="Ribonuclease P protein component">
    <location>
        <begin position="1"/>
        <end position="127"/>
    </location>
</feature>
<keyword id="KW-0255">Endonuclease</keyword>
<keyword id="KW-0378">Hydrolase</keyword>
<keyword id="KW-0540">Nuclease</keyword>
<keyword id="KW-1185">Reference proteome</keyword>
<keyword id="KW-0694">RNA-binding</keyword>
<keyword id="KW-0819">tRNA processing</keyword>
<reference key="1">
    <citation type="journal article" date="2003" name="Proc. Natl. Acad. Sci. U.S.A.">
        <title>Genome sequence of the cyanobacterium Prochlorococcus marinus SS120, a nearly minimal oxyphototrophic genome.</title>
        <authorList>
            <person name="Dufresne A."/>
            <person name="Salanoubat M."/>
            <person name="Partensky F."/>
            <person name="Artiguenave F."/>
            <person name="Axmann I.M."/>
            <person name="Barbe V."/>
            <person name="Duprat S."/>
            <person name="Galperin M.Y."/>
            <person name="Koonin E.V."/>
            <person name="Le Gall F."/>
            <person name="Makarova K.S."/>
            <person name="Ostrowski M."/>
            <person name="Oztas S."/>
            <person name="Robert C."/>
            <person name="Rogozin I.B."/>
            <person name="Scanlan D.J."/>
            <person name="Tandeau de Marsac N."/>
            <person name="Weissenbach J."/>
            <person name="Wincker P."/>
            <person name="Wolf Y.I."/>
            <person name="Hess W.R."/>
        </authorList>
    </citation>
    <scope>NUCLEOTIDE SEQUENCE [LARGE SCALE GENOMIC DNA]</scope>
    <source>
        <strain>SARG / CCMP1375 / SS120</strain>
    </source>
</reference>
<accession>Q7TVA1</accession>
<sequence length="127" mass="14762">MVLPKGMRLKGYKSFDYIHKSAKRYKSDSMMLRVTKANERLIKSTIKNSKSNSCRCAISISNKVSKKAVIRNRLRRLLHNHLKKRLFQKDAFSNNWLLLSLSPKCLDKNTENLLEECDKLLIEAGFC</sequence>
<name>RNPA_PROMA</name>
<organism>
    <name type="scientific">Prochlorococcus marinus (strain SARG / CCMP1375 / SS120)</name>
    <dbReference type="NCBI Taxonomy" id="167539"/>
    <lineage>
        <taxon>Bacteria</taxon>
        <taxon>Bacillati</taxon>
        <taxon>Cyanobacteriota</taxon>
        <taxon>Cyanophyceae</taxon>
        <taxon>Synechococcales</taxon>
        <taxon>Prochlorococcaceae</taxon>
        <taxon>Prochlorococcus</taxon>
    </lineage>
</organism>
<proteinExistence type="inferred from homology"/>
<dbReference type="EC" id="3.1.26.5" evidence="1"/>
<dbReference type="EMBL" id="AE017126">
    <property type="protein sequence ID" value="AAQ00344.1"/>
    <property type="molecule type" value="Genomic_DNA"/>
</dbReference>
<dbReference type="RefSeq" id="NP_875691.1">
    <property type="nucleotide sequence ID" value="NC_005042.1"/>
</dbReference>
<dbReference type="RefSeq" id="WP_011125451.1">
    <property type="nucleotide sequence ID" value="NC_005042.1"/>
</dbReference>
<dbReference type="SMR" id="Q7TVA1"/>
<dbReference type="STRING" id="167539.Pro_1300"/>
<dbReference type="EnsemblBacteria" id="AAQ00344">
    <property type="protein sequence ID" value="AAQ00344"/>
    <property type="gene ID" value="Pro_1300"/>
</dbReference>
<dbReference type="KEGG" id="pma:Pro_1300"/>
<dbReference type="PATRIC" id="fig|167539.5.peg.1365"/>
<dbReference type="eggNOG" id="COG0594">
    <property type="taxonomic scope" value="Bacteria"/>
</dbReference>
<dbReference type="HOGENOM" id="CLU_117179_2_0_3"/>
<dbReference type="OrthoDB" id="540358at2"/>
<dbReference type="Proteomes" id="UP000001420">
    <property type="component" value="Chromosome"/>
</dbReference>
<dbReference type="GO" id="GO:0030677">
    <property type="term" value="C:ribonuclease P complex"/>
    <property type="evidence" value="ECO:0007669"/>
    <property type="project" value="TreeGrafter"/>
</dbReference>
<dbReference type="GO" id="GO:0042781">
    <property type="term" value="F:3'-tRNA processing endoribonuclease activity"/>
    <property type="evidence" value="ECO:0007669"/>
    <property type="project" value="TreeGrafter"/>
</dbReference>
<dbReference type="GO" id="GO:0004526">
    <property type="term" value="F:ribonuclease P activity"/>
    <property type="evidence" value="ECO:0007669"/>
    <property type="project" value="UniProtKB-UniRule"/>
</dbReference>
<dbReference type="GO" id="GO:0000049">
    <property type="term" value="F:tRNA binding"/>
    <property type="evidence" value="ECO:0007669"/>
    <property type="project" value="UniProtKB-UniRule"/>
</dbReference>
<dbReference type="GO" id="GO:0001682">
    <property type="term" value="P:tRNA 5'-leader removal"/>
    <property type="evidence" value="ECO:0007669"/>
    <property type="project" value="UniProtKB-UniRule"/>
</dbReference>
<dbReference type="Gene3D" id="3.30.230.10">
    <property type="match status" value="1"/>
</dbReference>
<dbReference type="HAMAP" id="MF_00227">
    <property type="entry name" value="RNase_P"/>
    <property type="match status" value="1"/>
</dbReference>
<dbReference type="InterPro" id="IPR020568">
    <property type="entry name" value="Ribosomal_Su5_D2-typ_SF"/>
</dbReference>
<dbReference type="InterPro" id="IPR014721">
    <property type="entry name" value="Ribsml_uS5_D2-typ_fold_subgr"/>
</dbReference>
<dbReference type="InterPro" id="IPR000100">
    <property type="entry name" value="RNase_P"/>
</dbReference>
<dbReference type="PANTHER" id="PTHR33992">
    <property type="entry name" value="RIBONUCLEASE P PROTEIN COMPONENT"/>
    <property type="match status" value="1"/>
</dbReference>
<dbReference type="PANTHER" id="PTHR33992:SF1">
    <property type="entry name" value="RIBONUCLEASE P PROTEIN COMPONENT"/>
    <property type="match status" value="1"/>
</dbReference>
<dbReference type="Pfam" id="PF00825">
    <property type="entry name" value="Ribonuclease_P"/>
    <property type="match status" value="1"/>
</dbReference>
<dbReference type="SUPFAM" id="SSF54211">
    <property type="entry name" value="Ribosomal protein S5 domain 2-like"/>
    <property type="match status" value="1"/>
</dbReference>
<protein>
    <recommendedName>
        <fullName evidence="1">Ribonuclease P protein component</fullName>
        <shortName evidence="1">RNase P protein</shortName>
        <shortName evidence="1">RNaseP protein</shortName>
        <ecNumber evidence="1">3.1.26.5</ecNumber>
    </recommendedName>
    <alternativeName>
        <fullName evidence="1">Protein C5</fullName>
    </alternativeName>
</protein>
<gene>
    <name evidence="1" type="primary">rnpA</name>
    <name type="ordered locus">Pro_1300</name>
</gene>
<evidence type="ECO:0000255" key="1">
    <source>
        <dbReference type="HAMAP-Rule" id="MF_00227"/>
    </source>
</evidence>
<comment type="function">
    <text evidence="1">RNaseP catalyzes the removal of the 5'-leader sequence from pre-tRNA to produce the mature 5'-terminus. It can also cleave other RNA substrates such as 4.5S RNA. The protein component plays an auxiliary but essential role in vivo by binding to the 5'-leader sequence and broadening the substrate specificity of the ribozyme.</text>
</comment>
<comment type="catalytic activity">
    <reaction evidence="1">
        <text>Endonucleolytic cleavage of RNA, removing 5'-extranucleotides from tRNA precursor.</text>
        <dbReference type="EC" id="3.1.26.5"/>
    </reaction>
</comment>
<comment type="subunit">
    <text evidence="1">Consists of a catalytic RNA component (M1 or rnpB) and a protein subunit.</text>
</comment>
<comment type="similarity">
    <text evidence="1">Belongs to the RnpA family.</text>
</comment>